<organismHost>
    <name type="scientific">Aedes</name>
    <dbReference type="NCBI Taxonomy" id="7158"/>
</organismHost>
<organismHost>
    <name type="scientific">Bos taurus</name>
    <name type="common">Bovine</name>
    <dbReference type="NCBI Taxonomy" id="9913"/>
</organismHost>
<organismHost>
    <name type="scientific">Culicoides</name>
    <dbReference type="NCBI Taxonomy" id="58271"/>
</organismHost>
<organismHost>
    <name type="scientific">Equus asinus</name>
    <name type="common">Donkey</name>
    <name type="synonym">Equus africanus asinus</name>
    <dbReference type="NCBI Taxonomy" id="9793"/>
</organismHost>
<organismHost>
    <name type="scientific">Equus caballus</name>
    <name type="common">Horse</name>
    <dbReference type="NCBI Taxonomy" id="9796"/>
</organismHost>
<organismHost>
    <name type="scientific">Homo sapiens</name>
    <name type="common">Human</name>
    <dbReference type="NCBI Taxonomy" id="9606"/>
</organismHost>
<organismHost>
    <name type="scientific">Lutzomyia</name>
    <dbReference type="NCBI Taxonomy" id="252607"/>
</organismHost>
<organismHost>
    <name type="scientific">Musca domestica</name>
    <name type="common">House fly</name>
    <dbReference type="NCBI Taxonomy" id="7370"/>
</organismHost>
<organismHost>
    <name type="scientific">Simuliidae</name>
    <name type="common">black flies</name>
    <dbReference type="NCBI Taxonomy" id="7190"/>
</organismHost>
<organismHost>
    <name type="scientific">Sus scrofa</name>
    <name type="common">Pig</name>
    <dbReference type="NCBI Taxonomy" id="9823"/>
</organismHost>
<keyword id="KW-0002">3D-structure</keyword>
<keyword id="KW-0024">Alternative initiation</keyword>
<keyword id="KW-0053">Apoptosis</keyword>
<keyword id="KW-1262">Eukaryotic host gene expression shutoff by virus</keyword>
<keyword id="KW-1035">Host cytoplasm</keyword>
<keyword id="KW-1190">Host gene expression shutoff by virus</keyword>
<keyword id="KW-1043">Host membrane</keyword>
<keyword id="KW-1192">Host mRNA suppression by virus</keyword>
<keyword id="KW-1048">Host nucleus</keyword>
<keyword id="KW-0945">Host-virus interaction</keyword>
<keyword id="KW-1099">Inhibition of host mRNA nuclear export by virus</keyword>
<keyword id="KW-0472">Membrane</keyword>
<keyword id="KW-0597">Phosphoprotein</keyword>
<keyword id="KW-1198">Viral budding</keyword>
<keyword id="KW-1187">Viral budding via the host ESCRT complexes</keyword>
<keyword id="KW-0468">Viral matrix protein</keyword>
<keyword id="KW-1188">Viral release from host cell</keyword>
<keyword id="KW-0946">Virion</keyword>
<feature type="chain" id="PRO_0000287258" description="Matrix protein">
    <location>
        <begin position="1"/>
        <end position="229"/>
    </location>
</feature>
<feature type="region of interest" description="Disordered" evidence="3">
    <location>
        <begin position="1"/>
        <end position="23"/>
    </location>
</feature>
<feature type="short sequence motif" description="dynamin binding" evidence="1">
    <location>
        <begin position="2"/>
        <end position="4"/>
    </location>
</feature>
<feature type="short sequence motif" description="PPXY motif" evidence="1">
    <location>
        <begin position="24"/>
        <end position="27"/>
    </location>
</feature>
<feature type="short sequence motif" description="PTAP/PSAP motif" evidence="1">
    <location>
        <begin position="37"/>
        <end position="40"/>
    </location>
</feature>
<feature type="compositionally biased region" description="Low complexity" evidence="3">
    <location>
        <begin position="1"/>
        <end position="10"/>
    </location>
</feature>
<feature type="splice variant" id="VSP_025414" description="In isoform M3." evidence="4">
    <location>
        <begin position="1"/>
        <end position="50"/>
    </location>
</feature>
<feature type="splice variant" id="VSP_025415" description="In isoform M2." evidence="4">
    <location>
        <begin position="1"/>
        <end position="32"/>
    </location>
</feature>
<feature type="strand" evidence="5">
    <location>
        <begin position="60"/>
        <end position="76"/>
    </location>
</feature>
<feature type="helix" evidence="5">
    <location>
        <begin position="81"/>
        <end position="88"/>
    </location>
</feature>
<feature type="helix" evidence="5">
    <location>
        <begin position="89"/>
        <end position="92"/>
    </location>
</feature>
<feature type="helix" evidence="5">
    <location>
        <begin position="99"/>
        <end position="101"/>
    </location>
</feature>
<feature type="helix" evidence="5">
    <location>
        <begin position="102"/>
        <end position="114"/>
    </location>
</feature>
<feature type="strand" evidence="5">
    <location>
        <begin position="130"/>
        <end position="143"/>
    </location>
</feature>
<feature type="strand" evidence="5">
    <location>
        <begin position="156"/>
        <end position="163"/>
    </location>
</feature>
<feature type="strand" evidence="5">
    <location>
        <begin position="168"/>
        <end position="179"/>
    </location>
</feature>
<feature type="helix" evidence="5">
    <location>
        <begin position="189"/>
        <end position="192"/>
    </location>
</feature>
<feature type="helix" evidence="5">
    <location>
        <begin position="194"/>
        <end position="197"/>
    </location>
</feature>
<feature type="helix" evidence="5">
    <location>
        <begin position="201"/>
        <end position="206"/>
    </location>
</feature>
<feature type="turn" evidence="5">
    <location>
        <begin position="207"/>
        <end position="209"/>
    </location>
</feature>
<feature type="strand" evidence="5">
    <location>
        <begin position="210"/>
        <end position="214"/>
    </location>
</feature>
<feature type="strand" evidence="5">
    <location>
        <begin position="220"/>
        <end position="225"/>
    </location>
</feature>
<organism>
    <name type="scientific">Vesicular stomatitis Indiana virus (strain 94GUB Central America)</name>
    <name type="common">VSIV</name>
    <dbReference type="NCBI Taxonomy" id="434489"/>
    <lineage>
        <taxon>Viruses</taxon>
        <taxon>Riboviria</taxon>
        <taxon>Orthornavirae</taxon>
        <taxon>Negarnaviricota</taxon>
        <taxon>Haploviricotina</taxon>
        <taxon>Monjiviricetes</taxon>
        <taxon>Mononegavirales</taxon>
        <taxon>Rhabdoviridae</taxon>
        <taxon>Alpharhabdovirinae</taxon>
        <taxon>Vesiculovirus</taxon>
        <taxon>Vesiculovirus indiana</taxon>
    </lineage>
</organism>
<gene>
    <name type="primary">M</name>
</gene>
<protein>
    <recommendedName>
        <fullName evidence="1">Matrix protein</fullName>
        <shortName evidence="1">M protein</shortName>
    </recommendedName>
</protein>
<accession>Q8B0H2</accession>
<comment type="function">
    <text evidence="1">Forms a double layer around the helical nucleocapsid, the inner matrix layer binding to the N helix and the outer matrix layer binding to the envelope glycoprotein. Plays a major role in assembly and budding of virion, by recruiting cellular partners of the ESCRT complexes that play a key role in releasing the budding particle from the host membrane. Condensates the ribonucleocapsid core during virus assembly. Inhibits the host mRNA nuclear export thereby inducing the shut off of cellular transcription and preventing the interferon signaling and the establishment of antiviral state in infected cells. This shutoff presumably inhibits interferon signaling and thus establishment of antiviral state in virus infected cells. Induces cell-rounding, cytoskeleton disorganization and apoptosis in infected cell. Inhibits host transcription, possibly through interaction with host DNA repair factor IIH/TFIIH GTF2H5 subunit.</text>
</comment>
<comment type="subunit">
    <text evidence="1 2">Homomultimer. Interacts with viral nucleocapsid; this interaction contributes to the virion assembly (By similarity). Interacts with the viral envelope glycoprotein; this interaction contributes to the virion assembly (By similarity). Interacts with host RAE1-NUP98 complex. Interacts with host NEDD4 and TSG101. Interacts with host dynamin. Interacts with host NDUFAF4; the interaction inhibits viral propagation and is independent of interferon activation. Interacts with host GTF2H5; the interaction may inhibit host transcription (By similarity).</text>
</comment>
<comment type="interaction">
    <interactant intactId="EBI-40246300">
        <id>Q8B0H2</id>
    </interactant>
    <interactant intactId="EBI-1564678">
        <id>Q96J02</id>
        <label>ITCH</label>
    </interactant>
    <organismsDiffer>true</organismsDiffer>
    <experiments>2</experiments>
</comment>
<comment type="subcellular location">
    <subcellularLocation>
        <location evidence="1">Virion</location>
    </subcellularLocation>
    <subcellularLocation>
        <location evidence="1">Host endomembrane system</location>
        <topology evidence="1">Peripheral membrane protein</topology>
    </subcellularLocation>
    <subcellularLocation>
        <location evidence="1">Host nucleus membrane</location>
        <topology evidence="1">Peripheral membrane protein</topology>
    </subcellularLocation>
    <subcellularLocation>
        <location evidence="1">Host nucleus</location>
    </subcellularLocation>
    <subcellularLocation>
        <location evidence="1">Host cytoplasm</location>
    </subcellularLocation>
    <text evidence="1">In the virion, forms a double layer around the helical nucleocapsid, the inner matrix layer binding to the N helix and the outer matrix layer binding to the envelope glycoprotein. About 2480 copies of M are present in the virion.</text>
</comment>
<comment type="alternative products">
    <event type="alternative initiation"/>
    <isoform>
        <id>Q8B0H2-1</id>
        <name>M</name>
        <sequence type="displayed"/>
    </isoform>
    <isoform>
        <id>Q8B0H2-2</id>
        <name>M2</name>
        <sequence type="described" ref="VSP_025415"/>
    </isoform>
    <isoform>
        <id>Q8B0H2-3</id>
        <name>M3</name>
        <sequence type="described" ref="VSP_025414"/>
    </isoform>
</comment>
<comment type="domain">
    <text evidence="1">Late-budding domains (L domains) are short sequence motifs essential for viral particle budding. They recruit proteins of the host ESCRT machinery (Endosomal Sorting Complex Required for Transport) or ESCRT-associated proteins. M contains two overlapping L domains: a PPXY motif which interacts with the WW domain 3 of NEDD4 and a PTAP/PSAP motif, which interacts with the UEV domain of TSG101.</text>
</comment>
<comment type="PTM">
    <text evidence="1">Phosphorylated by host.</text>
</comment>
<comment type="biotechnology">
    <text>VSV is used as an oncolytic agent for cancer therapy, because of his wide host range, rapid replication and mild pathogenicity in humans. VSV used are mutated at M51R in their matrix protein. These mutated viruses cannot successfully infect normal cells, being unable to counteract the antiviral state induced by interferon-alpha in normal cells. Cancer cells are impeded with responsiveness to interferon, and then can be successfully infected and lysed by the virus.</text>
</comment>
<comment type="similarity">
    <text evidence="4">Belongs to the vesiculoviruses matrix protein family.</text>
</comment>
<dbReference type="EMBL" id="AF473866">
    <property type="protein sequence ID" value="AAN16992.1"/>
    <property type="molecule type" value="Genomic_RNA"/>
</dbReference>
<dbReference type="PDB" id="1LG7">
    <property type="method" value="X-ray"/>
    <property type="resolution" value="1.96 A"/>
    <property type="chains" value="A=48-229"/>
</dbReference>
<dbReference type="PDBsum" id="1LG7"/>
<dbReference type="SMR" id="Q8B0H2"/>
<dbReference type="IntAct" id="Q8B0H2">
    <property type="interactions" value="4"/>
</dbReference>
<dbReference type="EvolutionaryTrace" id="Q8B0H2"/>
<dbReference type="Proteomes" id="UP000007623">
    <property type="component" value="Genome"/>
</dbReference>
<dbReference type="GO" id="GO:0030430">
    <property type="term" value="C:host cell cytoplasm"/>
    <property type="evidence" value="ECO:0007669"/>
    <property type="project" value="UniProtKB-SubCell"/>
</dbReference>
<dbReference type="GO" id="GO:0044200">
    <property type="term" value="C:host cell nuclear membrane"/>
    <property type="evidence" value="ECO:0007669"/>
    <property type="project" value="UniProtKB-SubCell"/>
</dbReference>
<dbReference type="GO" id="GO:0016020">
    <property type="term" value="C:membrane"/>
    <property type="evidence" value="ECO:0007669"/>
    <property type="project" value="UniProtKB-KW"/>
</dbReference>
<dbReference type="GO" id="GO:0019031">
    <property type="term" value="C:viral envelope"/>
    <property type="evidence" value="ECO:0007669"/>
    <property type="project" value="InterPro"/>
</dbReference>
<dbReference type="GO" id="GO:0039660">
    <property type="term" value="F:structural constituent of virion"/>
    <property type="evidence" value="ECO:0007669"/>
    <property type="project" value="UniProtKB-KW"/>
</dbReference>
<dbReference type="GO" id="GO:0039522">
    <property type="term" value="P:symbiont-mediated suppression of host mRNA export from nucleus"/>
    <property type="evidence" value="ECO:0007669"/>
    <property type="project" value="UniProtKB-KW"/>
</dbReference>
<dbReference type="GO" id="GO:0039602">
    <property type="term" value="P:symbiont-mediated suppression of host transcription initiation from RNA polymerase II promoter"/>
    <property type="evidence" value="ECO:0000250"/>
    <property type="project" value="UniProtKB"/>
</dbReference>
<dbReference type="GO" id="GO:0039702">
    <property type="term" value="P:viral budding via host ESCRT complex"/>
    <property type="evidence" value="ECO:0007669"/>
    <property type="project" value="UniProtKB-KW"/>
</dbReference>
<dbReference type="FunFam" id="3.10.460.10:FF:000001">
    <property type="entry name" value="Matrix protein"/>
    <property type="match status" value="1"/>
</dbReference>
<dbReference type="Gene3D" id="3.10.460.10">
    <property type="entry name" value="VSV matrix protein"/>
    <property type="match status" value="1"/>
</dbReference>
<dbReference type="InterPro" id="IPR009397">
    <property type="entry name" value="Vesiculo_matrix"/>
</dbReference>
<dbReference type="InterPro" id="IPR036711">
    <property type="entry name" value="VSV_matrix_sf"/>
</dbReference>
<dbReference type="Pfam" id="PF06326">
    <property type="entry name" value="Vesiculo_matrix"/>
    <property type="match status" value="1"/>
</dbReference>
<dbReference type="SUPFAM" id="SSF75404">
    <property type="entry name" value="VSV matrix protein"/>
    <property type="match status" value="1"/>
</dbReference>
<reference key="1">
    <citation type="journal article" date="2002" name="J. Gen. Virol.">
        <title>Full-length genome analysis of natural isolates of vesicular stomatitis virus (Indiana 1 serotype) from North, Central and South America.</title>
        <authorList>
            <person name="Rodriguez L.L."/>
            <person name="Pauszek S.J."/>
            <person name="Bunch T.A."/>
            <person name="Schumann K.R."/>
        </authorList>
    </citation>
    <scope>NUCLEOTIDE SEQUENCE [GENOMIC RNA]</scope>
</reference>
<reference key="2">
    <citation type="journal article" date="2002" name="EMBO J.">
        <title>Crystal structure of vesicular stomatitis virus matrix protein.</title>
        <authorList>
            <person name="Gaudier M."/>
            <person name="Gaudin Y."/>
            <person name="Knossow M."/>
        </authorList>
    </citation>
    <scope>X-RAY CRYSTALLOGRAPHY (1.96 ANGSTROMS) OF 48-229</scope>
    <source>
        <strain>Orsay</strain>
    </source>
</reference>
<name>MATRX_VSIVC</name>
<proteinExistence type="evidence at protein level"/>
<evidence type="ECO:0000250" key="1">
    <source>
        <dbReference type="UniProtKB" id="P03519"/>
    </source>
</evidence>
<evidence type="ECO:0000250" key="2">
    <source>
        <dbReference type="UniProtKB" id="P08325"/>
    </source>
</evidence>
<evidence type="ECO:0000256" key="3">
    <source>
        <dbReference type="SAM" id="MobiDB-lite"/>
    </source>
</evidence>
<evidence type="ECO:0000305" key="4"/>
<evidence type="ECO:0007829" key="5">
    <source>
        <dbReference type="PDB" id="1LG7"/>
    </source>
</evidence>
<sequence length="229" mass="26038">MSSLKKILGLKGKGKKSKKLGIAPPPYEEDTSMEYAPSAPIDKSYFGVDEMDTHDPNQLRYEKFFFTVKMTVRSNRPFRTYSDVAAAVSHWDHMYIGMAGKRPFYKILAFLGSSNLKATPAVLADRGQPEYHAHCEGRAYLPHRMGKTPPMLNVPEHFRRPFNIGLYKGTVELTMTIYDDESLEAAPMIWDHFNSSKFSDFREKALMFGLIVEKKASGAWVLDSVSHFK</sequence>